<comment type="function">
    <text evidence="1">Transfers an acetyl group from acetyl-CoA to L-homoserine, forming acetyl-L-homoserine.</text>
</comment>
<comment type="catalytic activity">
    <reaction evidence="1">
        <text>L-homoserine + acetyl-CoA = O-acetyl-L-homoserine + CoA</text>
        <dbReference type="Rhea" id="RHEA:13701"/>
        <dbReference type="ChEBI" id="CHEBI:57287"/>
        <dbReference type="ChEBI" id="CHEBI:57288"/>
        <dbReference type="ChEBI" id="CHEBI:57476"/>
        <dbReference type="ChEBI" id="CHEBI:57716"/>
        <dbReference type="EC" id="2.3.1.31"/>
    </reaction>
</comment>
<comment type="pathway">
    <text evidence="1">Amino-acid biosynthesis; L-methionine biosynthesis via de novo pathway; O-acetyl-L-homoserine from L-homoserine: step 1/1.</text>
</comment>
<comment type="subunit">
    <text evidence="1">Homodimer.</text>
</comment>
<comment type="subcellular location">
    <subcellularLocation>
        <location evidence="1">Cytoplasm</location>
    </subcellularLocation>
</comment>
<comment type="similarity">
    <text evidence="1">Belongs to the AB hydrolase superfamily. MetX family.</text>
</comment>
<sequence length="392" mass="41244">MTIPDVPTQTLPDEGEIGFVHIGSLTTEAGAVIDDVHIAVQRWGELSPTRDNVVVVLHALTGDSHVTGPAGPGHPTGGWWDEMVGPGAPIDTDRWCAVATNVLGGCRGSTGPSSRTRDGKPWGSRFPRISIRDQVEADIAALAALGIDEVAAVVGGSMGGARALEWIVGHPSRVRAGLLLAVGARATADQIGTQCTQIAAIKSDPNWQGGDYHDTGRTPDAGLAIARRFAHLTYRGEVELDTRFGNDAQLDEDPANSGRYAVQSYLEYQGVKLVERFDAGSYVVLTEALNSHDVGRARGGVRKALRSCPVPVVVGGITSDRLYPLRLQQELAEQLPGCAELQVVDSICGHDGFLVESEAVGEMIRKTLLLAGSQSAGPGGAGPGSRKGTTRR</sequence>
<gene>
    <name evidence="1" type="primary">metXA</name>
    <name type="ordered locus">MAP_3458</name>
</gene>
<organism>
    <name type="scientific">Mycolicibacterium paratuberculosis (strain ATCC BAA-968 / K-10)</name>
    <name type="common">Mycobacterium paratuberculosis</name>
    <dbReference type="NCBI Taxonomy" id="262316"/>
    <lineage>
        <taxon>Bacteria</taxon>
        <taxon>Bacillati</taxon>
        <taxon>Actinomycetota</taxon>
        <taxon>Actinomycetes</taxon>
        <taxon>Mycobacteriales</taxon>
        <taxon>Mycobacteriaceae</taxon>
        <taxon>Mycobacterium</taxon>
        <taxon>Mycobacterium avium complex (MAC)</taxon>
    </lineage>
</organism>
<reference key="1">
    <citation type="journal article" date="2005" name="Proc. Natl. Acad. Sci. U.S.A.">
        <title>The complete genome sequence of Mycobacterium avium subspecies paratuberculosis.</title>
        <authorList>
            <person name="Li L."/>
            <person name="Bannantine J.P."/>
            <person name="Zhang Q."/>
            <person name="Amonsin A."/>
            <person name="May B.J."/>
            <person name="Alt D."/>
            <person name="Banerji N."/>
            <person name="Kanjilal S."/>
            <person name="Kapur V."/>
        </authorList>
    </citation>
    <scope>NUCLEOTIDE SEQUENCE [LARGE SCALE GENOMIC DNA]</scope>
    <source>
        <strain>ATCC BAA-968 / K-10</strain>
    </source>
</reference>
<dbReference type="EC" id="2.3.1.31" evidence="1"/>
<dbReference type="EMBL" id="AE016958">
    <property type="protein sequence ID" value="AAS06008.1"/>
    <property type="molecule type" value="Genomic_DNA"/>
</dbReference>
<dbReference type="SMR" id="Q73UB0"/>
<dbReference type="STRING" id="262316.MAP_3458"/>
<dbReference type="ESTHER" id="mycpa-q73ub0">
    <property type="family name" value="Homoserine_transacetylase"/>
</dbReference>
<dbReference type="KEGG" id="mpa:MAP_3458"/>
<dbReference type="eggNOG" id="COG2021">
    <property type="taxonomic scope" value="Bacteria"/>
</dbReference>
<dbReference type="HOGENOM" id="CLU_028760_1_0_11"/>
<dbReference type="UniPathway" id="UPA00051">
    <property type="reaction ID" value="UER00074"/>
</dbReference>
<dbReference type="Proteomes" id="UP000000580">
    <property type="component" value="Chromosome"/>
</dbReference>
<dbReference type="GO" id="GO:0005737">
    <property type="term" value="C:cytoplasm"/>
    <property type="evidence" value="ECO:0007669"/>
    <property type="project" value="UniProtKB-SubCell"/>
</dbReference>
<dbReference type="GO" id="GO:0004414">
    <property type="term" value="F:homoserine O-acetyltransferase activity"/>
    <property type="evidence" value="ECO:0007669"/>
    <property type="project" value="UniProtKB-UniRule"/>
</dbReference>
<dbReference type="GO" id="GO:0009092">
    <property type="term" value="P:homoserine metabolic process"/>
    <property type="evidence" value="ECO:0007669"/>
    <property type="project" value="TreeGrafter"/>
</dbReference>
<dbReference type="GO" id="GO:0009086">
    <property type="term" value="P:methionine biosynthetic process"/>
    <property type="evidence" value="ECO:0007669"/>
    <property type="project" value="UniProtKB-UniRule"/>
</dbReference>
<dbReference type="Gene3D" id="3.40.50.1820">
    <property type="entry name" value="alpha/beta hydrolase"/>
    <property type="match status" value="1"/>
</dbReference>
<dbReference type="HAMAP" id="MF_00296">
    <property type="entry name" value="MetX_acyltransf"/>
    <property type="match status" value="1"/>
</dbReference>
<dbReference type="InterPro" id="IPR000073">
    <property type="entry name" value="AB_hydrolase_1"/>
</dbReference>
<dbReference type="InterPro" id="IPR029058">
    <property type="entry name" value="AB_hydrolase_fold"/>
</dbReference>
<dbReference type="InterPro" id="IPR008220">
    <property type="entry name" value="HAT_MetX-like"/>
</dbReference>
<dbReference type="NCBIfam" id="TIGR01392">
    <property type="entry name" value="homoserO_Ac_trn"/>
    <property type="match status" value="1"/>
</dbReference>
<dbReference type="NCBIfam" id="NF001209">
    <property type="entry name" value="PRK00175.1"/>
    <property type="match status" value="1"/>
</dbReference>
<dbReference type="PANTHER" id="PTHR32268">
    <property type="entry name" value="HOMOSERINE O-ACETYLTRANSFERASE"/>
    <property type="match status" value="1"/>
</dbReference>
<dbReference type="PANTHER" id="PTHR32268:SF11">
    <property type="entry name" value="HOMOSERINE O-ACETYLTRANSFERASE"/>
    <property type="match status" value="1"/>
</dbReference>
<dbReference type="Pfam" id="PF00561">
    <property type="entry name" value="Abhydrolase_1"/>
    <property type="match status" value="1"/>
</dbReference>
<dbReference type="PIRSF" id="PIRSF000443">
    <property type="entry name" value="Homoser_Ac_trans"/>
    <property type="match status" value="1"/>
</dbReference>
<dbReference type="SUPFAM" id="SSF53474">
    <property type="entry name" value="alpha/beta-Hydrolases"/>
    <property type="match status" value="1"/>
</dbReference>
<accession>Q73UB0</accession>
<keyword id="KW-0012">Acyltransferase</keyword>
<keyword id="KW-0028">Amino-acid biosynthesis</keyword>
<keyword id="KW-0963">Cytoplasm</keyword>
<keyword id="KW-0486">Methionine biosynthesis</keyword>
<keyword id="KW-1185">Reference proteome</keyword>
<keyword id="KW-0808">Transferase</keyword>
<feature type="chain" id="PRO_0000155730" description="Homoserine O-acetyltransferase">
    <location>
        <begin position="1"/>
        <end position="392"/>
    </location>
</feature>
<feature type="domain" description="AB hydrolase-1" evidence="1">
    <location>
        <begin position="52"/>
        <end position="356"/>
    </location>
</feature>
<feature type="region of interest" description="Disordered" evidence="2">
    <location>
        <begin position="373"/>
        <end position="392"/>
    </location>
</feature>
<feature type="active site" description="Nucleophile" evidence="1">
    <location>
        <position position="157"/>
    </location>
</feature>
<feature type="active site" evidence="1">
    <location>
        <position position="320"/>
    </location>
</feature>
<feature type="active site" evidence="1">
    <location>
        <position position="350"/>
    </location>
</feature>
<feature type="binding site" evidence="1">
    <location>
        <position position="227"/>
    </location>
    <ligand>
        <name>substrate</name>
    </ligand>
</feature>
<feature type="binding site" evidence="1">
    <location>
        <position position="351"/>
    </location>
    <ligand>
        <name>substrate</name>
    </ligand>
</feature>
<proteinExistence type="inferred from homology"/>
<evidence type="ECO:0000255" key="1">
    <source>
        <dbReference type="HAMAP-Rule" id="MF_00296"/>
    </source>
</evidence>
<evidence type="ECO:0000256" key="2">
    <source>
        <dbReference type="SAM" id="MobiDB-lite"/>
    </source>
</evidence>
<name>METXA_MYCPA</name>
<protein>
    <recommendedName>
        <fullName evidence="1">Homoserine O-acetyltransferase</fullName>
        <shortName evidence="1">HAT</shortName>
        <ecNumber evidence="1">2.3.1.31</ecNumber>
    </recommendedName>
    <alternativeName>
        <fullName evidence="1">Homoserine transacetylase</fullName>
        <shortName evidence="1">HTA</shortName>
    </alternativeName>
</protein>